<keyword id="KW-0975">Bacterial flagellum</keyword>
<keyword id="KW-0997">Cell inner membrane</keyword>
<keyword id="KW-1003">Cell membrane</keyword>
<keyword id="KW-0145">Chemotaxis</keyword>
<keyword id="KW-0283">Flagellar rotation</keyword>
<keyword id="KW-0472">Membrane</keyword>
<keyword id="KW-1185">Reference proteome</keyword>
<feature type="chain" id="PRO_0000184089" description="Flagellar motor switch protein FliG">
    <location>
        <begin position="1"/>
        <end position="331"/>
    </location>
</feature>
<feature type="short sequence motif" description="Part of the EHPQR-motif">
    <location>
        <begin position="125"/>
        <end position="128"/>
    </location>
</feature>
<feature type="site" description="Part of the EHPQR-motif">
    <location>
        <position position="160"/>
    </location>
</feature>
<feature type="mutagenesis site" description="Decreases binding to YcgR, significantly improves motility in a pdeH disruption mutant." evidence="1">
    <original>Q</original>
    <variation>W</variation>
    <location>
        <position position="252"/>
    </location>
</feature>
<feature type="mutagenesis site" description="Slightly improves motility in a pdeH disruption mutant." evidence="1">
    <original>D</original>
    <variation>W</variation>
    <location>
        <position position="284"/>
    </location>
</feature>
<feature type="mutagenesis site" description="Decreases binding to YcgR, significantly improves motility in a pdeH disruption mutant." evidence="1">
    <original>N</original>
    <variation>W</variation>
    <location>
        <position position="292"/>
    </location>
</feature>
<feature type="mutagenesis site" description="Decreases binding to YcgR, significantly improves motility in a pdeH disruption mutant." evidence="1">
    <original>P</original>
    <variation>W</variation>
    <location>
        <position position="295"/>
    </location>
</feature>
<feature type="mutagenesis site" description="Slightly improves motility in a pdeH disruption mutant." evidence="1">
    <original>L</original>
    <variation>W</variation>
    <location>
        <position position="298"/>
    </location>
</feature>
<feature type="sequence conflict" description="In Ref. 1; AAA75241." evidence="2" ref="1">
    <original>LRIATFGGVQPA</original>
    <variation>FVSHLWRRAPS</variation>
    <location>
        <begin position="159"/>
        <end position="170"/>
    </location>
</feature>
<organism>
    <name type="scientific">Escherichia coli (strain K12)</name>
    <dbReference type="NCBI Taxonomy" id="83333"/>
    <lineage>
        <taxon>Bacteria</taxon>
        <taxon>Pseudomonadati</taxon>
        <taxon>Pseudomonadota</taxon>
        <taxon>Gammaproteobacteria</taxon>
        <taxon>Enterobacterales</taxon>
        <taxon>Enterobacteriaceae</taxon>
        <taxon>Escherichia</taxon>
    </lineage>
</organism>
<accession>P0ABZ1</accession>
<accession>P31067</accession>
<accession>P76915</accession>
<name>FLIG_ECOLI</name>
<comment type="function">
    <text>FliG is one of three proteins (FliG, FliN, FliM) that forms the rotor-mounted switch complex (C ring), located at the base of the basal body. This complex interacts with the CheY and CheZ chemotaxis proteins, in addition to contacting components of the motor that determine the direction of flagellar rotation.</text>
</comment>
<comment type="subunit">
    <text evidence="1">Forms dimers and other homooligomers. Interacts with MotA via residues in its C-terminus. Interacts with flagellar brake protein YcgR.</text>
</comment>
<comment type="interaction">
    <interactant intactId="EBI-1126524">
        <id>P0ABZ1</id>
    </interactant>
    <interactant intactId="EBI-1126492">
        <id>P25798</id>
        <label>fliF</label>
    </interactant>
    <organismsDiffer>false</organismsDiffer>
    <experiments>4</experiments>
</comment>
<comment type="interaction">
    <interactant intactId="EBI-1126524">
        <id>P0ABZ1</id>
    </interactant>
    <interactant intactId="EBI-1126524">
        <id>P0ABZ1</id>
        <label>fliG</label>
    </interactant>
    <organismsDiffer>false</organismsDiffer>
    <experiments>6</experiments>
</comment>
<comment type="interaction">
    <interactant intactId="EBI-1126524">
        <id>P0ABZ1</id>
    </interactant>
    <interactant intactId="EBI-560439">
        <id>P06974</id>
        <label>fliM</label>
    </interactant>
    <organismsDiffer>false</organismsDiffer>
    <experiments>16</experiments>
</comment>
<comment type="interaction">
    <interactant intactId="EBI-1126524">
        <id>P0ABZ1</id>
    </interactant>
    <interactant intactId="EBI-554507">
        <id>P76010</id>
        <label>ycgR</label>
    </interactant>
    <organismsDiffer>false</organismsDiffer>
    <experiments>3</experiments>
</comment>
<comment type="subcellular location">
    <subcellularLocation>
        <location>Cell inner membrane</location>
        <topology>Peripheral membrane protein</topology>
        <orientation>Cytoplasmic side</orientation>
    </subcellularLocation>
    <subcellularLocation>
        <location>Bacterial flagellum basal body</location>
    </subcellularLocation>
</comment>
<comment type="similarity">
    <text evidence="2">Belongs to the FliG family.</text>
</comment>
<evidence type="ECO:0000269" key="1">
    <source>
    </source>
</evidence>
<evidence type="ECO:0000305" key="2"/>
<proteinExistence type="evidence at protein level"/>
<reference key="1">
    <citation type="journal article" date="1993" name="Gene">
        <title>Gene sequence, overproduction, purification and determination of the wild-type level of the Escherichia coli flagellar switch protein FliG.</title>
        <authorList>
            <person name="Roman S.J."/>
            <person name="Frantz B.B."/>
            <person name="Matsumura P."/>
        </authorList>
    </citation>
    <scope>NUCLEOTIDE SEQUENCE [GENOMIC DNA]</scope>
</reference>
<reference key="2">
    <citation type="journal article" date="1996" name="J. Bacteriol.">
        <title>A mutational analysis of the interaction between FliG and FliM, two components of the flagellar motor of Escherichia coli.</title>
        <authorList>
            <person name="Marykwas D.L."/>
            <person name="Berg H.C."/>
        </authorList>
    </citation>
    <scope>NUCLEOTIDE SEQUENCE [GENOMIC DNA]</scope>
</reference>
<reference key="3">
    <citation type="journal article" date="1996" name="DNA Res.">
        <title>A 460-kb DNA sequence of the Escherichia coli K-12 genome corresponding to the 40.1-50.0 min region on the linkage map.</title>
        <authorList>
            <person name="Itoh T."/>
            <person name="Aiba H."/>
            <person name="Baba T."/>
            <person name="Fujita K."/>
            <person name="Hayashi K."/>
            <person name="Inada T."/>
            <person name="Isono K."/>
            <person name="Kasai H."/>
            <person name="Kimura S."/>
            <person name="Kitakawa M."/>
            <person name="Kitagawa M."/>
            <person name="Makino K."/>
            <person name="Miki T."/>
            <person name="Mizobuchi K."/>
            <person name="Mori H."/>
            <person name="Mori T."/>
            <person name="Motomura K."/>
            <person name="Nakade S."/>
            <person name="Nakamura Y."/>
            <person name="Nashimoto H."/>
            <person name="Nishio Y."/>
            <person name="Oshima T."/>
            <person name="Saito N."/>
            <person name="Sampei G."/>
            <person name="Seki Y."/>
            <person name="Sivasundaram S."/>
            <person name="Tagami H."/>
            <person name="Takeda J."/>
            <person name="Takemoto K."/>
            <person name="Wada C."/>
            <person name="Yamamoto Y."/>
            <person name="Horiuchi T."/>
        </authorList>
    </citation>
    <scope>NUCLEOTIDE SEQUENCE [LARGE SCALE GENOMIC DNA]</scope>
    <source>
        <strain>K12 / W3110 / ATCC 27325 / DSM 5911</strain>
    </source>
</reference>
<reference key="4">
    <citation type="journal article" date="1997" name="Science">
        <title>The complete genome sequence of Escherichia coli K-12.</title>
        <authorList>
            <person name="Blattner F.R."/>
            <person name="Plunkett G. III"/>
            <person name="Bloch C.A."/>
            <person name="Perna N.T."/>
            <person name="Burland V."/>
            <person name="Riley M."/>
            <person name="Collado-Vides J."/>
            <person name="Glasner J.D."/>
            <person name="Rode C.K."/>
            <person name="Mayhew G.F."/>
            <person name="Gregor J."/>
            <person name="Davis N.W."/>
            <person name="Kirkpatrick H.A."/>
            <person name="Goeden M.A."/>
            <person name="Rose D.J."/>
            <person name="Mau B."/>
            <person name="Shao Y."/>
        </authorList>
    </citation>
    <scope>NUCLEOTIDE SEQUENCE [LARGE SCALE GENOMIC DNA]</scope>
    <source>
        <strain>K12 / MG1655 / ATCC 47076</strain>
    </source>
</reference>
<reference key="5">
    <citation type="journal article" date="2006" name="Mol. Syst. Biol.">
        <title>Highly accurate genome sequences of Escherichia coli K-12 strains MG1655 and W3110.</title>
        <authorList>
            <person name="Hayashi K."/>
            <person name="Morooka N."/>
            <person name="Yamamoto Y."/>
            <person name="Fujita K."/>
            <person name="Isono K."/>
            <person name="Choi S."/>
            <person name="Ohtsubo E."/>
            <person name="Baba T."/>
            <person name="Wanner B.L."/>
            <person name="Mori H."/>
            <person name="Horiuchi T."/>
        </authorList>
    </citation>
    <scope>NUCLEOTIDE SEQUENCE [LARGE SCALE GENOMIC DNA]</scope>
    <source>
        <strain>K12 / W3110 / ATCC 27325 / DSM 5911</strain>
    </source>
</reference>
<reference key="6">
    <citation type="submission" date="1997-01" db="EMBL/GenBank/DDBJ databases">
        <authorList>
            <person name="al Mamun A.A.M."/>
            <person name="Tominaga A."/>
            <person name="Enomoto M."/>
        </authorList>
    </citation>
    <scope>NUCLEOTIDE SEQUENCE [GENOMIC DNA] OF 1-47</scope>
    <source>
        <strain>K12</strain>
    </source>
</reference>
<reference key="7">
    <citation type="journal article" date="2010" name="Mol. Cell">
        <title>The c-di-GMP binding protein YcgR controls flagellar motor direction and speed to affect chemotaxis by a 'backstop brake' mechanism.</title>
        <authorList>
            <person name="Paul K."/>
            <person name="Nieto V."/>
            <person name="Carlquist W.C."/>
            <person name="Blair D.F."/>
            <person name="Harshey R.M."/>
        </authorList>
    </citation>
    <scope>INTERACTION WITH YCGR</scope>
    <scope>HOMOOLIGOMERIZATION</scope>
    <scope>MUTAGENESIS OF GLN-252; ASP-284; ASN-292; PRO-295 AND LEU-298</scope>
    <source>
        <strain>K12 / RP3098</strain>
    </source>
</reference>
<reference key="8">
    <citation type="journal article" date="2008" name="Int. Rev. Cytol.">
        <title>Flagellar motility in bacteria structure and function of flagellar motor.</title>
        <authorList>
            <person name="Terashima H."/>
            <person name="Kojima S."/>
            <person name="Homma M."/>
        </authorList>
    </citation>
    <scope>REVIEW</scope>
</reference>
<gene>
    <name type="primary">fliG</name>
    <name type="synonym">fla AII.2</name>
    <name type="synonym">fla BII</name>
    <name type="ordered locus">b1939</name>
    <name type="ordered locus">JW1923</name>
</gene>
<sequence>MSNLTGTDKSVILLMTIGEDRAAEVFKHLSQREVQTLSAAMANVTQISNKQLTDVLAEFEQEAEQFAALNINANDYLRSVLVKALGEERAASLLEDILETRDTASGIETLNFMEPQSAADLIRDEHPQIIATILVHLKRAQAADILALFDERLRHDVMLRIATFGGVQPAALAELTEVLNGLLDGQNLKRSKMGGVRTAAEIINLMKTQQEEAVITAVREFDGELAQKIIDEMFLFENLVDVDDRSIQRLLQEVDSESLLIALKGAEQPLREKFLRNMSQRAADILRDDLANRGPVRLSQVENEQKAILLIVRRLAETGEMVIGSGEDTYV</sequence>
<protein>
    <recommendedName>
        <fullName>Flagellar motor switch protein FliG</fullName>
    </recommendedName>
</protein>
<dbReference type="EMBL" id="L13243">
    <property type="protein sequence ID" value="AAA75241.1"/>
    <property type="molecule type" value="Genomic_DNA"/>
</dbReference>
<dbReference type="EMBL" id="U46011">
    <property type="protein sequence ID" value="AAB60186.1"/>
    <property type="molecule type" value="Genomic_DNA"/>
</dbReference>
<dbReference type="EMBL" id="U00096">
    <property type="protein sequence ID" value="AAC75006.1"/>
    <property type="molecule type" value="Genomic_DNA"/>
</dbReference>
<dbReference type="EMBL" id="AP009048">
    <property type="protein sequence ID" value="BAA15764.1"/>
    <property type="molecule type" value="Genomic_DNA"/>
</dbReference>
<dbReference type="EMBL" id="D89826">
    <property type="protein sequence ID" value="BAA14030.1"/>
    <property type="molecule type" value="Genomic_DNA"/>
</dbReference>
<dbReference type="PIR" id="H64957">
    <property type="entry name" value="H64957"/>
</dbReference>
<dbReference type="RefSeq" id="NP_416449.1">
    <property type="nucleotide sequence ID" value="NC_000913.3"/>
</dbReference>
<dbReference type="RefSeq" id="WP_000067950.1">
    <property type="nucleotide sequence ID" value="NZ_STEB01000050.1"/>
</dbReference>
<dbReference type="SMR" id="P0ABZ1"/>
<dbReference type="BioGRID" id="4260384">
    <property type="interactions" value="34"/>
</dbReference>
<dbReference type="BioGRID" id="850805">
    <property type="interactions" value="7"/>
</dbReference>
<dbReference type="ComplexPortal" id="CPX-1082">
    <property type="entry name" value="Flagellar Motor Switch Complex, CW variant"/>
</dbReference>
<dbReference type="ComplexPortal" id="CPX-1085">
    <property type="entry name" value="Flagellar Motor Switch Complex, CCW variant"/>
</dbReference>
<dbReference type="DIP" id="DIP-408N"/>
<dbReference type="FunCoup" id="P0ABZ1">
    <property type="interactions" value="102"/>
</dbReference>
<dbReference type="IntAct" id="P0ABZ1">
    <property type="interactions" value="26"/>
</dbReference>
<dbReference type="MINT" id="P0ABZ1"/>
<dbReference type="STRING" id="511145.b1939"/>
<dbReference type="PaxDb" id="511145-b1939"/>
<dbReference type="EnsemblBacteria" id="AAC75006">
    <property type="protein sequence ID" value="AAC75006"/>
    <property type="gene ID" value="b1939"/>
</dbReference>
<dbReference type="GeneID" id="75205820"/>
<dbReference type="GeneID" id="946451"/>
<dbReference type="KEGG" id="ecj:JW1923"/>
<dbReference type="KEGG" id="eco:b1939"/>
<dbReference type="KEGG" id="ecoc:C3026_10985"/>
<dbReference type="PATRIC" id="fig|1411691.4.peg.312"/>
<dbReference type="EchoBASE" id="EB1607"/>
<dbReference type="eggNOG" id="COG1536">
    <property type="taxonomic scope" value="Bacteria"/>
</dbReference>
<dbReference type="HOGENOM" id="CLU_047835_2_0_6"/>
<dbReference type="InParanoid" id="P0ABZ1"/>
<dbReference type="OMA" id="FIQDEHP"/>
<dbReference type="OrthoDB" id="9780302at2"/>
<dbReference type="PhylomeDB" id="P0ABZ1"/>
<dbReference type="BioCyc" id="EcoCyc:FLIG-FLAGELLAR-SWITCH-PROTEIN"/>
<dbReference type="PRO" id="PR:P0ABZ1"/>
<dbReference type="Proteomes" id="UP000000625">
    <property type="component" value="Chromosome"/>
</dbReference>
<dbReference type="GO" id="GO:0009288">
    <property type="term" value="C:bacterial-type flagellum"/>
    <property type="evidence" value="ECO:0000303"/>
    <property type="project" value="ComplexPortal"/>
</dbReference>
<dbReference type="GO" id="GO:0009433">
    <property type="term" value="C:bacterial-type flagellum basal body, C ring"/>
    <property type="evidence" value="ECO:0000303"/>
    <property type="project" value="ComplexPortal"/>
</dbReference>
<dbReference type="GO" id="GO:0120107">
    <property type="term" value="C:bacterial-type flagellum rotor complex"/>
    <property type="evidence" value="ECO:0000303"/>
    <property type="project" value="ComplexPortal"/>
</dbReference>
<dbReference type="GO" id="GO:0005886">
    <property type="term" value="C:plasma membrane"/>
    <property type="evidence" value="ECO:0000314"/>
    <property type="project" value="EcoCyc"/>
</dbReference>
<dbReference type="GO" id="GO:0003774">
    <property type="term" value="F:cytoskeletal motor activity"/>
    <property type="evidence" value="ECO:0007669"/>
    <property type="project" value="InterPro"/>
</dbReference>
<dbReference type="GO" id="GO:0042802">
    <property type="term" value="F:identical protein binding"/>
    <property type="evidence" value="ECO:0000353"/>
    <property type="project" value="IntAct"/>
</dbReference>
<dbReference type="GO" id="GO:0044780">
    <property type="term" value="P:bacterial-type flagellum assembly"/>
    <property type="evidence" value="ECO:0000315"/>
    <property type="project" value="EcoCyc"/>
</dbReference>
<dbReference type="GO" id="GO:0071973">
    <property type="term" value="P:bacterial-type flagellum-dependent cell motility"/>
    <property type="evidence" value="ECO:0000315"/>
    <property type="project" value="EcoCyc"/>
</dbReference>
<dbReference type="GO" id="GO:0071977">
    <property type="term" value="P:bacterial-type flagellum-dependent swimming motility"/>
    <property type="evidence" value="ECO:0000303"/>
    <property type="project" value="ComplexPortal"/>
</dbReference>
<dbReference type="GO" id="GO:0006935">
    <property type="term" value="P:chemotaxis"/>
    <property type="evidence" value="ECO:0000303"/>
    <property type="project" value="ComplexPortal"/>
</dbReference>
<dbReference type="FunFam" id="1.10.220.30:FF:000001">
    <property type="entry name" value="Flagellar motor switch protein FliG"/>
    <property type="match status" value="1"/>
</dbReference>
<dbReference type="FunFam" id="1.10.220.30:FF:000002">
    <property type="entry name" value="Flagellar motor switch protein FliG"/>
    <property type="match status" value="1"/>
</dbReference>
<dbReference type="FunFam" id="1.10.220.30:FF:000003">
    <property type="entry name" value="Flagellar motor switch protein FliG"/>
    <property type="match status" value="1"/>
</dbReference>
<dbReference type="Gene3D" id="1.10.220.30">
    <property type="match status" value="3"/>
</dbReference>
<dbReference type="InterPro" id="IPR000090">
    <property type="entry name" value="Flg_Motor_Flig"/>
</dbReference>
<dbReference type="InterPro" id="IPR023087">
    <property type="entry name" value="Flg_Motor_Flig_C"/>
</dbReference>
<dbReference type="InterPro" id="IPR011002">
    <property type="entry name" value="FliG_a-hlx"/>
</dbReference>
<dbReference type="InterPro" id="IPR032779">
    <property type="entry name" value="FliG_M"/>
</dbReference>
<dbReference type="InterPro" id="IPR028263">
    <property type="entry name" value="FliG_N"/>
</dbReference>
<dbReference type="NCBIfam" id="TIGR00207">
    <property type="entry name" value="fliG"/>
    <property type="match status" value="1"/>
</dbReference>
<dbReference type="PANTHER" id="PTHR30534">
    <property type="entry name" value="FLAGELLAR MOTOR SWITCH PROTEIN FLIG"/>
    <property type="match status" value="1"/>
</dbReference>
<dbReference type="PANTHER" id="PTHR30534:SF0">
    <property type="entry name" value="FLAGELLAR MOTOR SWITCH PROTEIN FLIG"/>
    <property type="match status" value="1"/>
</dbReference>
<dbReference type="Pfam" id="PF01706">
    <property type="entry name" value="FliG_C"/>
    <property type="match status" value="1"/>
</dbReference>
<dbReference type="Pfam" id="PF14841">
    <property type="entry name" value="FliG_M"/>
    <property type="match status" value="1"/>
</dbReference>
<dbReference type="Pfam" id="PF14842">
    <property type="entry name" value="FliG_N"/>
    <property type="match status" value="1"/>
</dbReference>
<dbReference type="PIRSF" id="PIRSF003161">
    <property type="entry name" value="FliG"/>
    <property type="match status" value="1"/>
</dbReference>
<dbReference type="PRINTS" id="PR00954">
    <property type="entry name" value="FLGMOTORFLIG"/>
</dbReference>
<dbReference type="SUPFAM" id="SSF48029">
    <property type="entry name" value="FliG"/>
    <property type="match status" value="2"/>
</dbReference>